<reference key="1">
    <citation type="journal article" date="2004" name="Nat. Biotechnol.">
        <title>Complete sequence and comparative genome analysis of the dairy bacterium Streptococcus thermophilus.</title>
        <authorList>
            <person name="Bolotin A."/>
            <person name="Quinquis B."/>
            <person name="Renault P."/>
            <person name="Sorokin A."/>
            <person name="Ehrlich S.D."/>
            <person name="Kulakauskas S."/>
            <person name="Lapidus A."/>
            <person name="Goltsman E."/>
            <person name="Mazur M."/>
            <person name="Pusch G.D."/>
            <person name="Fonstein M."/>
            <person name="Overbeek R."/>
            <person name="Kyprides N."/>
            <person name="Purnelle B."/>
            <person name="Prozzi D."/>
            <person name="Ngui K."/>
            <person name="Masuy D."/>
            <person name="Hancy F."/>
            <person name="Burteau S."/>
            <person name="Boutry M."/>
            <person name="Delcour J."/>
            <person name="Goffeau A."/>
            <person name="Hols P."/>
        </authorList>
    </citation>
    <scope>NUCLEOTIDE SEQUENCE [LARGE SCALE GENOMIC DNA]</scope>
    <source>
        <strain>CNRZ 1066</strain>
    </source>
</reference>
<organism>
    <name type="scientific">Streptococcus thermophilus (strain CNRZ 1066)</name>
    <dbReference type="NCBI Taxonomy" id="299768"/>
    <lineage>
        <taxon>Bacteria</taxon>
        <taxon>Bacillati</taxon>
        <taxon>Bacillota</taxon>
        <taxon>Bacilli</taxon>
        <taxon>Lactobacillales</taxon>
        <taxon>Streptococcaceae</taxon>
        <taxon>Streptococcus</taxon>
    </lineage>
</organism>
<name>RS11_STRT1</name>
<keyword id="KW-0687">Ribonucleoprotein</keyword>
<keyword id="KW-0689">Ribosomal protein</keyword>
<keyword id="KW-0694">RNA-binding</keyword>
<keyword id="KW-0699">rRNA-binding</keyword>
<protein>
    <recommendedName>
        <fullName evidence="1">Small ribosomal subunit protein uS11</fullName>
    </recommendedName>
    <alternativeName>
        <fullName evidence="2">30S ribosomal protein S11</fullName>
    </alternativeName>
</protein>
<dbReference type="EMBL" id="CP000024">
    <property type="protein sequence ID" value="AAV63422.1"/>
    <property type="molecule type" value="Genomic_DNA"/>
</dbReference>
<dbReference type="RefSeq" id="WP_002887520.1">
    <property type="nucleotide sequence ID" value="NC_006449.1"/>
</dbReference>
<dbReference type="SMR" id="Q5LXT6"/>
<dbReference type="GeneID" id="66899637"/>
<dbReference type="KEGG" id="stc:str1909"/>
<dbReference type="HOGENOM" id="CLU_072439_5_0_9"/>
<dbReference type="GO" id="GO:1990904">
    <property type="term" value="C:ribonucleoprotein complex"/>
    <property type="evidence" value="ECO:0007669"/>
    <property type="project" value="UniProtKB-KW"/>
</dbReference>
<dbReference type="GO" id="GO:0005840">
    <property type="term" value="C:ribosome"/>
    <property type="evidence" value="ECO:0007669"/>
    <property type="project" value="UniProtKB-KW"/>
</dbReference>
<dbReference type="GO" id="GO:0019843">
    <property type="term" value="F:rRNA binding"/>
    <property type="evidence" value="ECO:0007669"/>
    <property type="project" value="UniProtKB-UniRule"/>
</dbReference>
<dbReference type="GO" id="GO:0003735">
    <property type="term" value="F:structural constituent of ribosome"/>
    <property type="evidence" value="ECO:0007669"/>
    <property type="project" value="InterPro"/>
</dbReference>
<dbReference type="GO" id="GO:0006412">
    <property type="term" value="P:translation"/>
    <property type="evidence" value="ECO:0007669"/>
    <property type="project" value="UniProtKB-UniRule"/>
</dbReference>
<dbReference type="FunFam" id="3.30.420.80:FF:000001">
    <property type="entry name" value="30S ribosomal protein S11"/>
    <property type="match status" value="1"/>
</dbReference>
<dbReference type="Gene3D" id="3.30.420.80">
    <property type="entry name" value="Ribosomal protein S11"/>
    <property type="match status" value="1"/>
</dbReference>
<dbReference type="HAMAP" id="MF_01310">
    <property type="entry name" value="Ribosomal_uS11"/>
    <property type="match status" value="1"/>
</dbReference>
<dbReference type="InterPro" id="IPR001971">
    <property type="entry name" value="Ribosomal_uS11"/>
</dbReference>
<dbReference type="InterPro" id="IPR019981">
    <property type="entry name" value="Ribosomal_uS11_bac-type"/>
</dbReference>
<dbReference type="InterPro" id="IPR018102">
    <property type="entry name" value="Ribosomal_uS11_CS"/>
</dbReference>
<dbReference type="InterPro" id="IPR036967">
    <property type="entry name" value="Ribosomal_uS11_sf"/>
</dbReference>
<dbReference type="NCBIfam" id="NF003698">
    <property type="entry name" value="PRK05309.1"/>
    <property type="match status" value="1"/>
</dbReference>
<dbReference type="NCBIfam" id="TIGR03632">
    <property type="entry name" value="uS11_bact"/>
    <property type="match status" value="1"/>
</dbReference>
<dbReference type="PANTHER" id="PTHR11759">
    <property type="entry name" value="40S RIBOSOMAL PROTEIN S14/30S RIBOSOMAL PROTEIN S11"/>
    <property type="match status" value="1"/>
</dbReference>
<dbReference type="Pfam" id="PF00411">
    <property type="entry name" value="Ribosomal_S11"/>
    <property type="match status" value="1"/>
</dbReference>
<dbReference type="PIRSF" id="PIRSF002131">
    <property type="entry name" value="Ribosomal_S11"/>
    <property type="match status" value="1"/>
</dbReference>
<dbReference type="SUPFAM" id="SSF53137">
    <property type="entry name" value="Translational machinery components"/>
    <property type="match status" value="1"/>
</dbReference>
<dbReference type="PROSITE" id="PS00054">
    <property type="entry name" value="RIBOSOMAL_S11"/>
    <property type="match status" value="1"/>
</dbReference>
<accession>Q5LXT6</accession>
<evidence type="ECO:0000255" key="1">
    <source>
        <dbReference type="HAMAP-Rule" id="MF_01310"/>
    </source>
</evidence>
<evidence type="ECO:0000305" key="2"/>
<feature type="chain" id="PRO_0000230436" description="Small ribosomal subunit protein uS11">
    <location>
        <begin position="1"/>
        <end position="127"/>
    </location>
</feature>
<comment type="function">
    <text evidence="1">Located on the platform of the 30S subunit, it bridges several disparate RNA helices of the 16S rRNA. Forms part of the Shine-Dalgarno cleft in the 70S ribosome.</text>
</comment>
<comment type="subunit">
    <text evidence="1">Part of the 30S ribosomal subunit. Interacts with proteins S7 and S18. Binds to IF-3.</text>
</comment>
<comment type="similarity">
    <text evidence="1">Belongs to the universal ribosomal protein uS11 family.</text>
</comment>
<proteinExistence type="inferred from homology"/>
<sequence>MAKPTRKRRVKKNIESGIAHIHATFNNTIVMITDVHGNAVAWSSAGALGFKGSRKSTPFAAQMASEAAAKSAQEHGLKTVEVTVKGPGSGRESAIRALAAAGLEVTAIRDVTPVPHNGARPPKRRRV</sequence>
<gene>
    <name evidence="1" type="primary">rpsK</name>
    <name type="ordered locus">str1909</name>
</gene>